<gene>
    <name evidence="1" type="primary">eco</name>
    <name type="ordered locus">PLES_23231</name>
</gene>
<name>ECOT_PSEA8</name>
<reference key="1">
    <citation type="journal article" date="2009" name="Genome Res.">
        <title>Newly introduced genomic prophage islands are critical determinants of in vivo competitiveness in the Liverpool epidemic strain of Pseudomonas aeruginosa.</title>
        <authorList>
            <person name="Winstanley C."/>
            <person name="Langille M.G.I."/>
            <person name="Fothergill J.L."/>
            <person name="Kukavica-Ibrulj I."/>
            <person name="Paradis-Bleau C."/>
            <person name="Sanschagrin F."/>
            <person name="Thomson N.R."/>
            <person name="Winsor G.L."/>
            <person name="Quail M.A."/>
            <person name="Lennard N."/>
            <person name="Bignell A."/>
            <person name="Clarke L."/>
            <person name="Seeger K."/>
            <person name="Saunders D."/>
            <person name="Harris D."/>
            <person name="Parkhill J."/>
            <person name="Hancock R.E.W."/>
            <person name="Brinkman F.S.L."/>
            <person name="Levesque R.C."/>
        </authorList>
    </citation>
    <scope>NUCLEOTIDE SEQUENCE [LARGE SCALE GENOMIC DNA]</scope>
    <source>
        <strain>LESB58</strain>
    </source>
</reference>
<proteinExistence type="inferred from homology"/>
<keyword id="KW-1015">Disulfide bond</keyword>
<keyword id="KW-0574">Periplasm</keyword>
<keyword id="KW-0646">Protease inhibitor</keyword>
<keyword id="KW-0722">Serine protease inhibitor</keyword>
<keyword id="KW-0732">Signal</keyword>
<evidence type="ECO:0000255" key="1">
    <source>
        <dbReference type="HAMAP-Rule" id="MF_00706"/>
    </source>
</evidence>
<organism>
    <name type="scientific">Pseudomonas aeruginosa (strain LESB58)</name>
    <dbReference type="NCBI Taxonomy" id="557722"/>
    <lineage>
        <taxon>Bacteria</taxon>
        <taxon>Pseudomonadati</taxon>
        <taxon>Pseudomonadota</taxon>
        <taxon>Gammaproteobacteria</taxon>
        <taxon>Pseudomonadales</taxon>
        <taxon>Pseudomonadaceae</taxon>
        <taxon>Pseudomonas</taxon>
    </lineage>
</organism>
<dbReference type="EMBL" id="FM209186">
    <property type="protein sequence ID" value="CAW27050.1"/>
    <property type="molecule type" value="Genomic_DNA"/>
</dbReference>
<dbReference type="RefSeq" id="WP_003090808.1">
    <property type="nucleotide sequence ID" value="NC_011770.1"/>
</dbReference>
<dbReference type="SMR" id="B7UZW2"/>
<dbReference type="MEROPS" id="I11.003"/>
<dbReference type="KEGG" id="pag:PLES_23231"/>
<dbReference type="HOGENOM" id="CLU_111565_0_0_6"/>
<dbReference type="GO" id="GO:0042597">
    <property type="term" value="C:periplasmic space"/>
    <property type="evidence" value="ECO:0007669"/>
    <property type="project" value="UniProtKB-SubCell"/>
</dbReference>
<dbReference type="GO" id="GO:0004867">
    <property type="term" value="F:serine-type endopeptidase inhibitor activity"/>
    <property type="evidence" value="ECO:0007669"/>
    <property type="project" value="UniProtKB-UniRule"/>
</dbReference>
<dbReference type="CDD" id="cd00242">
    <property type="entry name" value="Ecotin"/>
    <property type="match status" value="1"/>
</dbReference>
<dbReference type="Gene3D" id="2.60.40.550">
    <property type="entry name" value="Ecotin"/>
    <property type="match status" value="1"/>
</dbReference>
<dbReference type="Gene3D" id="4.10.1230.10">
    <property type="entry name" value="Ecotin, trypsin inhibitor"/>
    <property type="match status" value="1"/>
</dbReference>
<dbReference type="HAMAP" id="MF_00706">
    <property type="entry name" value="Ecotin"/>
    <property type="match status" value="1"/>
</dbReference>
<dbReference type="InterPro" id="IPR027438">
    <property type="entry name" value="Ecotin_C"/>
</dbReference>
<dbReference type="InterPro" id="IPR036198">
    <property type="entry name" value="Ecotin_sf"/>
</dbReference>
<dbReference type="InterPro" id="IPR005658">
    <property type="entry name" value="Prot_inh_ecotin"/>
</dbReference>
<dbReference type="InterPro" id="IPR023084">
    <property type="entry name" value="Prot_inh_ecotin_gammaproteobac"/>
</dbReference>
<dbReference type="NCBIfam" id="NF002987">
    <property type="entry name" value="PRK03719.1"/>
    <property type="match status" value="1"/>
</dbReference>
<dbReference type="PANTHER" id="PTHR35890">
    <property type="match status" value="1"/>
</dbReference>
<dbReference type="PANTHER" id="PTHR35890:SF3">
    <property type="entry name" value="ECOTIN"/>
    <property type="match status" value="1"/>
</dbReference>
<dbReference type="Pfam" id="PF03974">
    <property type="entry name" value="Ecotin"/>
    <property type="match status" value="1"/>
</dbReference>
<dbReference type="PIRSF" id="PIRSF006865">
    <property type="entry name" value="Prot_inh_ecotin"/>
    <property type="match status" value="1"/>
</dbReference>
<dbReference type="SUPFAM" id="SSF49772">
    <property type="entry name" value="Ecotin, trypsin inhibitor"/>
    <property type="match status" value="1"/>
</dbReference>
<feature type="signal peptide" evidence="1">
    <location>
        <begin position="1"/>
        <end position="19"/>
    </location>
</feature>
<feature type="chain" id="PRO_1000132364" description="Ecotin">
    <location>
        <begin position="20"/>
        <end position="156"/>
    </location>
</feature>
<feature type="site" description="Reactive bond" evidence="1">
    <location>
        <begin position="99"/>
        <end position="100"/>
    </location>
</feature>
<feature type="disulfide bond" evidence="1">
    <location>
        <begin position="65"/>
        <end position="102"/>
    </location>
</feature>
<protein>
    <recommendedName>
        <fullName evidence="1">Ecotin</fullName>
    </recommendedName>
</protein>
<comment type="function">
    <text evidence="1">General inhibitor of family S1 serine proteases.</text>
</comment>
<comment type="subunit">
    <text evidence="1">Homodimer.</text>
</comment>
<comment type="subcellular location">
    <subcellularLocation>
        <location evidence="1">Periplasm</location>
    </subcellularLocation>
</comment>
<comment type="similarity">
    <text evidence="1">Belongs to the protease inhibitor I11 (ecotin) family.</text>
</comment>
<accession>B7UZW2</accession>
<sequence length="156" mass="17281">MKALLIAAGVAALSSTAMAAKLDEKVPYPKADAGFTRQVIHLPKQDAEDAFKVEIIAGKTLEADCNQQRLGGELEEHTLEGWGYSYYRLDKVSGPMSTMMACPGQKKEQRFIPVVGEGFLLRYNSKLPIVVYAPKDVEVRYRIWSASEKVEKAVSE</sequence>